<comment type="function">
    <text evidence="2">The physiological role of BioH is to remove the methyl group introduced by BioC when the pimeloyl moiety is complete. It allows to synthesize pimeloyl-ACP via the fatty acid synthetic pathway through the hydrolysis of the ester bonds of pimeloyl-ACP esters.</text>
</comment>
<comment type="catalytic activity">
    <reaction evidence="2">
        <text>6-carboxyhexanoyl-[ACP] methyl ester + H2O = 6-carboxyhexanoyl-[ACP] + methanol + H(+)</text>
        <dbReference type="Rhea" id="RHEA:42700"/>
        <dbReference type="Rhea" id="RHEA-COMP:9955"/>
        <dbReference type="Rhea" id="RHEA-COMP:10186"/>
        <dbReference type="ChEBI" id="CHEBI:15377"/>
        <dbReference type="ChEBI" id="CHEBI:15378"/>
        <dbReference type="ChEBI" id="CHEBI:17790"/>
        <dbReference type="ChEBI" id="CHEBI:78846"/>
        <dbReference type="ChEBI" id="CHEBI:82735"/>
        <dbReference type="EC" id="3.1.1.85"/>
    </reaction>
</comment>
<comment type="pathway">
    <text evidence="2">Cofactor biosynthesis; biotin biosynthesis.</text>
</comment>
<comment type="subunit">
    <text evidence="2">Monomer.</text>
</comment>
<comment type="subcellular location">
    <subcellularLocation>
        <location evidence="2">Cytoplasm</location>
    </subcellularLocation>
</comment>
<comment type="similarity">
    <text evidence="2">Belongs to the AB hydrolase superfamily. Carboxylesterase BioH family.</text>
</comment>
<gene>
    <name evidence="2" type="primary">bioH</name>
    <name type="ordered locus">YE3995</name>
</gene>
<evidence type="ECO:0000255" key="1"/>
<evidence type="ECO:0000255" key="2">
    <source>
        <dbReference type="HAMAP-Rule" id="MF_01260"/>
    </source>
</evidence>
<feature type="chain" id="PRO_1000067283" description="Pimeloyl-[acyl-carrier protein] methyl ester esterase">
    <location>
        <begin position="1"/>
        <end position="258"/>
    </location>
</feature>
<feature type="domain" description="AB hydrolase-1" evidence="1">
    <location>
        <begin position="16"/>
        <end position="241"/>
    </location>
</feature>
<feature type="active site" description="Nucleophile" evidence="2">
    <location>
        <position position="82"/>
    </location>
</feature>
<feature type="active site" evidence="2">
    <location>
        <position position="207"/>
    </location>
</feature>
<feature type="active site" evidence="2">
    <location>
        <position position="235"/>
    </location>
</feature>
<feature type="binding site" evidence="2">
    <location>
        <position position="22"/>
    </location>
    <ligand>
        <name>substrate</name>
    </ligand>
</feature>
<feature type="binding site" evidence="2">
    <location>
        <begin position="82"/>
        <end position="83"/>
    </location>
    <ligand>
        <name>substrate</name>
    </ligand>
</feature>
<feature type="binding site" evidence="2">
    <location>
        <begin position="143"/>
        <end position="147"/>
    </location>
    <ligand>
        <name>substrate</name>
    </ligand>
</feature>
<feature type="binding site" evidence="2">
    <location>
        <position position="235"/>
    </location>
    <ligand>
        <name>substrate</name>
    </ligand>
</feature>
<protein>
    <recommendedName>
        <fullName evidence="2">Pimeloyl-[acyl-carrier protein] methyl ester esterase</fullName>
        <ecNumber evidence="2">3.1.1.85</ecNumber>
    </recommendedName>
    <alternativeName>
        <fullName evidence="2">Biotin synthesis protein BioH</fullName>
    </alternativeName>
    <alternativeName>
        <fullName evidence="2">Carboxylesterase BioH</fullName>
    </alternativeName>
</protein>
<keyword id="KW-0093">Biotin biosynthesis</keyword>
<keyword id="KW-0963">Cytoplasm</keyword>
<keyword id="KW-0378">Hydrolase</keyword>
<keyword id="KW-0719">Serine esterase</keyword>
<proteinExistence type="inferred from homology"/>
<accession>A1JSF8</accession>
<sequence length="258" mass="28590">MKQLYWNICGEGDCDLVLLHGWGLNAGVWHCIIDRLTPHFRLHLVDLPGYGRSTEFGAMSLSEMAEIVLQQAPQQAIWLGWSMGGLVASQIALSHPERVRGLITVSSSPCFTAHDEWPGIRPEVLAGFQQQLSEDFQRTVERFLALQTLGTESARQDARLLKAVVLQHQMPEVAVLTGGLDILRTADLREELADCSLPFLRIYGYLDGLVPRKVAALLNSQWPHTQSVVMPGSAHAPFVSHPEAFSQLVVDFAQQSNT</sequence>
<dbReference type="EC" id="3.1.1.85" evidence="2"/>
<dbReference type="EMBL" id="AM286415">
    <property type="protein sequence ID" value="CAL14015.1"/>
    <property type="molecule type" value="Genomic_DNA"/>
</dbReference>
<dbReference type="RefSeq" id="WP_011817359.1">
    <property type="nucleotide sequence ID" value="NC_008800.1"/>
</dbReference>
<dbReference type="RefSeq" id="YP_001008141.1">
    <property type="nucleotide sequence ID" value="NC_008800.1"/>
</dbReference>
<dbReference type="SMR" id="A1JSF8"/>
<dbReference type="ESTHER" id="yere8-bioh">
    <property type="family name" value="BioH"/>
</dbReference>
<dbReference type="KEGG" id="yen:YE3995"/>
<dbReference type="PATRIC" id="fig|393305.7.peg.4253"/>
<dbReference type="eggNOG" id="COG0596">
    <property type="taxonomic scope" value="Bacteria"/>
</dbReference>
<dbReference type="HOGENOM" id="CLU_020336_12_2_6"/>
<dbReference type="OrthoDB" id="9780744at2"/>
<dbReference type="UniPathway" id="UPA00078"/>
<dbReference type="Proteomes" id="UP000000642">
    <property type="component" value="Chromosome"/>
</dbReference>
<dbReference type="GO" id="GO:0005737">
    <property type="term" value="C:cytoplasm"/>
    <property type="evidence" value="ECO:0007669"/>
    <property type="project" value="UniProtKB-SubCell"/>
</dbReference>
<dbReference type="GO" id="GO:0090499">
    <property type="term" value="F:pimelyl-[acyl-carrier protein] methyl ester esterase activity"/>
    <property type="evidence" value="ECO:0007669"/>
    <property type="project" value="UniProtKB-EC"/>
</dbReference>
<dbReference type="GO" id="GO:0009102">
    <property type="term" value="P:biotin biosynthetic process"/>
    <property type="evidence" value="ECO:0007669"/>
    <property type="project" value="UniProtKB-UniRule"/>
</dbReference>
<dbReference type="Gene3D" id="3.40.50.1820">
    <property type="entry name" value="alpha/beta hydrolase"/>
    <property type="match status" value="1"/>
</dbReference>
<dbReference type="HAMAP" id="MF_01260">
    <property type="entry name" value="Carboxylester"/>
    <property type="match status" value="1"/>
</dbReference>
<dbReference type="InterPro" id="IPR000073">
    <property type="entry name" value="AB_hydrolase_1"/>
</dbReference>
<dbReference type="InterPro" id="IPR029058">
    <property type="entry name" value="AB_hydrolase_fold"/>
</dbReference>
<dbReference type="InterPro" id="IPR010076">
    <property type="entry name" value="BioH"/>
</dbReference>
<dbReference type="InterPro" id="IPR050228">
    <property type="entry name" value="Carboxylesterase_BioH"/>
</dbReference>
<dbReference type="NCBIfam" id="TIGR01738">
    <property type="entry name" value="bioH"/>
    <property type="match status" value="1"/>
</dbReference>
<dbReference type="PANTHER" id="PTHR43194">
    <property type="entry name" value="HYDROLASE ALPHA/BETA FOLD FAMILY"/>
    <property type="match status" value="1"/>
</dbReference>
<dbReference type="PANTHER" id="PTHR43194:SF5">
    <property type="entry name" value="PIMELOYL-[ACYL-CARRIER PROTEIN] METHYL ESTER ESTERASE"/>
    <property type="match status" value="1"/>
</dbReference>
<dbReference type="Pfam" id="PF00561">
    <property type="entry name" value="Abhydrolase_1"/>
    <property type="match status" value="1"/>
</dbReference>
<dbReference type="SUPFAM" id="SSF53474">
    <property type="entry name" value="alpha/beta-Hydrolases"/>
    <property type="match status" value="1"/>
</dbReference>
<organism>
    <name type="scientific">Yersinia enterocolitica serotype O:8 / biotype 1B (strain NCTC 13174 / 8081)</name>
    <dbReference type="NCBI Taxonomy" id="393305"/>
    <lineage>
        <taxon>Bacteria</taxon>
        <taxon>Pseudomonadati</taxon>
        <taxon>Pseudomonadota</taxon>
        <taxon>Gammaproteobacteria</taxon>
        <taxon>Enterobacterales</taxon>
        <taxon>Yersiniaceae</taxon>
        <taxon>Yersinia</taxon>
    </lineage>
</organism>
<reference key="1">
    <citation type="journal article" date="2006" name="PLoS Genet.">
        <title>The complete genome sequence and comparative genome analysis of the high pathogenicity Yersinia enterocolitica strain 8081.</title>
        <authorList>
            <person name="Thomson N.R."/>
            <person name="Howard S."/>
            <person name="Wren B.W."/>
            <person name="Holden M.T.G."/>
            <person name="Crossman L."/>
            <person name="Challis G.L."/>
            <person name="Churcher C."/>
            <person name="Mungall K."/>
            <person name="Brooks K."/>
            <person name="Chillingworth T."/>
            <person name="Feltwell T."/>
            <person name="Abdellah Z."/>
            <person name="Hauser H."/>
            <person name="Jagels K."/>
            <person name="Maddison M."/>
            <person name="Moule S."/>
            <person name="Sanders M."/>
            <person name="Whitehead S."/>
            <person name="Quail M.A."/>
            <person name="Dougan G."/>
            <person name="Parkhill J."/>
            <person name="Prentice M.B."/>
        </authorList>
    </citation>
    <scope>NUCLEOTIDE SEQUENCE [LARGE SCALE GENOMIC DNA]</scope>
    <source>
        <strain>NCTC 13174 / 8081</strain>
    </source>
</reference>
<name>BIOH_YERE8</name>